<organism>
    <name type="scientific">Danio rerio</name>
    <name type="common">Zebrafish</name>
    <name type="synonym">Brachydanio rerio</name>
    <dbReference type="NCBI Taxonomy" id="7955"/>
    <lineage>
        <taxon>Eukaryota</taxon>
        <taxon>Metazoa</taxon>
        <taxon>Chordata</taxon>
        <taxon>Craniata</taxon>
        <taxon>Vertebrata</taxon>
        <taxon>Euteleostomi</taxon>
        <taxon>Actinopterygii</taxon>
        <taxon>Neopterygii</taxon>
        <taxon>Teleostei</taxon>
        <taxon>Ostariophysi</taxon>
        <taxon>Cypriniformes</taxon>
        <taxon>Danionidae</taxon>
        <taxon>Danioninae</taxon>
        <taxon>Danio</taxon>
    </lineage>
</organism>
<name>RN152_DANRE</name>
<reference key="1">
    <citation type="submission" date="2005-03" db="EMBL/GenBank/DDBJ databases">
        <authorList>
            <consortium name="NIH - Zebrafish Gene Collection (ZGC) project"/>
        </authorList>
    </citation>
    <scope>NUCLEOTIDE SEQUENCE [LARGE SCALE MRNA]</scope>
    <source>
        <tissue>Embryo</tissue>
    </source>
</reference>
<gene>
    <name evidence="1" type="primary">rnf152</name>
    <name evidence="5" type="ORF">zgc:110537</name>
</gene>
<feature type="chain" id="PRO_0000405837" description="E3 ubiquitin-protein ligase rnf152">
    <location>
        <begin position="1"/>
        <end position="198"/>
    </location>
</feature>
<feature type="transmembrane region" description="Helical" evidence="2">
    <location>
        <begin position="162"/>
        <end position="182"/>
    </location>
</feature>
<feature type="zinc finger region" description="RING-type" evidence="3">
    <location>
        <begin position="12"/>
        <end position="55"/>
    </location>
</feature>
<accession>Q58EC8</accession>
<comment type="function">
    <text evidence="1">E3 ubiquitin-protein ligase that acts as a negative regulator of mTORC1 signaling by mediating ubiquitination of RagA/RRAGA and RHEB. Catalyzes 'Lys-63'-linked polyubiquitination of RagA/RRAGA in response to amino acid starvation, thereby regulating mTORC1 signaling. Also mediates monoubiquitination of RHEB, promoting its association with the TSC-TBC complex and subsequent inhibition. Also mediates 'Lys-48'-linked polyubiquitination of target proteins and their subsequent targeting to the proteasome for degradation.</text>
</comment>
<comment type="catalytic activity">
    <reaction evidence="1">
        <text>S-ubiquitinyl-[E2 ubiquitin-conjugating enzyme]-L-cysteine + [acceptor protein]-L-lysine = [E2 ubiquitin-conjugating enzyme]-L-cysteine + N(6)-ubiquitinyl-[acceptor protein]-L-lysine.</text>
        <dbReference type="EC" id="2.3.2.27"/>
    </reaction>
</comment>
<comment type="pathway">
    <text evidence="1">Protein modification; protein ubiquitination.</text>
</comment>
<comment type="subcellular location">
    <subcellularLocation>
        <location evidence="1">Lysosome membrane</location>
        <topology evidence="1">Single-pass membrane protein</topology>
    </subcellularLocation>
</comment>
<comment type="similarity">
    <text evidence="4">Belongs to the RNF152 family.</text>
</comment>
<protein>
    <recommendedName>
        <fullName evidence="4">E3 ubiquitin-protein ligase rnf152</fullName>
        <ecNumber evidence="1">2.3.2.27</ecNumber>
    </recommendedName>
    <alternativeName>
        <fullName evidence="1">RING finger protein 152</fullName>
    </alternativeName>
    <alternativeName>
        <fullName evidence="4">RING-type E3 ubiquitin transferase rnf152</fullName>
    </alternativeName>
</protein>
<evidence type="ECO:0000250" key="1">
    <source>
        <dbReference type="UniProtKB" id="Q8N8N0"/>
    </source>
</evidence>
<evidence type="ECO:0000255" key="2"/>
<evidence type="ECO:0000255" key="3">
    <source>
        <dbReference type="PROSITE-ProRule" id="PRU00175"/>
    </source>
</evidence>
<evidence type="ECO:0000305" key="4"/>
<evidence type="ECO:0000312" key="5">
    <source>
        <dbReference type="EMBL" id="AAH91974.1"/>
    </source>
</evidence>
<dbReference type="EC" id="2.3.2.27" evidence="1"/>
<dbReference type="EMBL" id="BC091974">
    <property type="protein sequence ID" value="AAH91974.1"/>
    <property type="molecule type" value="mRNA"/>
</dbReference>
<dbReference type="RefSeq" id="NP_001014380.1">
    <property type="nucleotide sequence ID" value="NM_001014358.1"/>
</dbReference>
<dbReference type="SMR" id="Q58EC8"/>
<dbReference type="FunCoup" id="Q58EC8">
    <property type="interactions" value="1659"/>
</dbReference>
<dbReference type="STRING" id="7955.ENSDARP00000106876"/>
<dbReference type="PaxDb" id="7955-ENSDARP00000106876"/>
<dbReference type="GeneID" id="541544"/>
<dbReference type="KEGG" id="dre:541544"/>
<dbReference type="AGR" id="ZFIN:ZDB-GENE-050327-84"/>
<dbReference type="CTD" id="220441"/>
<dbReference type="ZFIN" id="ZDB-GENE-050327-84">
    <property type="gene designation" value="rnf152"/>
</dbReference>
<dbReference type="eggNOG" id="KOG2177">
    <property type="taxonomic scope" value="Eukaryota"/>
</dbReference>
<dbReference type="InParanoid" id="Q58EC8"/>
<dbReference type="OrthoDB" id="6106880at2759"/>
<dbReference type="PhylomeDB" id="Q58EC8"/>
<dbReference type="Reactome" id="R-DRE-8866654">
    <property type="pathway name" value="E3 ubiquitin ligases ubiquitinate target proteins"/>
</dbReference>
<dbReference type="UniPathway" id="UPA00143"/>
<dbReference type="PRO" id="PR:Q58EC8"/>
<dbReference type="Proteomes" id="UP000000437">
    <property type="component" value="Chromosome 2"/>
</dbReference>
<dbReference type="GO" id="GO:0005765">
    <property type="term" value="C:lysosomal membrane"/>
    <property type="evidence" value="ECO:0000250"/>
    <property type="project" value="UniProtKB"/>
</dbReference>
<dbReference type="GO" id="GO:0005764">
    <property type="term" value="C:lysosome"/>
    <property type="evidence" value="ECO:0000250"/>
    <property type="project" value="UniProtKB"/>
</dbReference>
<dbReference type="GO" id="GO:0031090">
    <property type="term" value="C:organelle membrane"/>
    <property type="evidence" value="ECO:0000250"/>
    <property type="project" value="UniProtKB"/>
</dbReference>
<dbReference type="GO" id="GO:0061630">
    <property type="term" value="F:ubiquitin protein ligase activity"/>
    <property type="evidence" value="ECO:0000318"/>
    <property type="project" value="GO_Central"/>
</dbReference>
<dbReference type="GO" id="GO:0004842">
    <property type="term" value="F:ubiquitin-protein transferase activity"/>
    <property type="evidence" value="ECO:0000250"/>
    <property type="project" value="UniProtKB"/>
</dbReference>
<dbReference type="GO" id="GO:0008270">
    <property type="term" value="F:zinc ion binding"/>
    <property type="evidence" value="ECO:0007669"/>
    <property type="project" value="UniProtKB-KW"/>
</dbReference>
<dbReference type="GO" id="GO:0006915">
    <property type="term" value="P:apoptotic process"/>
    <property type="evidence" value="ECO:0007669"/>
    <property type="project" value="InterPro"/>
</dbReference>
<dbReference type="GO" id="GO:0034198">
    <property type="term" value="P:cellular response to amino acid starvation"/>
    <property type="evidence" value="ECO:0000250"/>
    <property type="project" value="UniProtKB"/>
</dbReference>
<dbReference type="GO" id="GO:0001654">
    <property type="term" value="P:eye development"/>
    <property type="evidence" value="ECO:0000315"/>
    <property type="project" value="ZFIN"/>
</dbReference>
<dbReference type="GO" id="GO:0030902">
    <property type="term" value="P:hindbrain development"/>
    <property type="evidence" value="ECO:0000315"/>
    <property type="project" value="ZFIN"/>
</dbReference>
<dbReference type="GO" id="GO:0030917">
    <property type="term" value="P:midbrain-hindbrain boundary development"/>
    <property type="evidence" value="ECO:0000315"/>
    <property type="project" value="ZFIN"/>
</dbReference>
<dbReference type="GO" id="GO:1904262">
    <property type="term" value="P:negative regulation of TORC1 signaling"/>
    <property type="evidence" value="ECO:0000250"/>
    <property type="project" value="UniProtKB"/>
</dbReference>
<dbReference type="GO" id="GO:0010508">
    <property type="term" value="P:positive regulation of autophagy"/>
    <property type="evidence" value="ECO:0000250"/>
    <property type="project" value="UniProtKB"/>
</dbReference>
<dbReference type="GO" id="GO:0070936">
    <property type="term" value="P:protein K48-linked ubiquitination"/>
    <property type="evidence" value="ECO:0000250"/>
    <property type="project" value="UniProtKB"/>
</dbReference>
<dbReference type="GO" id="GO:0070534">
    <property type="term" value="P:protein K63-linked ubiquitination"/>
    <property type="evidence" value="ECO:0000250"/>
    <property type="project" value="UniProtKB"/>
</dbReference>
<dbReference type="GO" id="GO:0006513">
    <property type="term" value="P:protein monoubiquitination"/>
    <property type="evidence" value="ECO:0000250"/>
    <property type="project" value="UniProtKB"/>
</dbReference>
<dbReference type="CDD" id="cd16548">
    <property type="entry name" value="RING-HC_RNF152"/>
    <property type="match status" value="1"/>
</dbReference>
<dbReference type="FunFam" id="3.30.40.10:FF:000197">
    <property type="entry name" value="E3 ubiquitin-protein ligase RNF152"/>
    <property type="match status" value="1"/>
</dbReference>
<dbReference type="Gene3D" id="3.30.40.10">
    <property type="entry name" value="Zinc/RING finger domain, C3HC4 (zinc finger)"/>
    <property type="match status" value="1"/>
</dbReference>
<dbReference type="InterPro" id="IPR033609">
    <property type="entry name" value="RING_RNF152"/>
</dbReference>
<dbReference type="InterPro" id="IPR045744">
    <property type="entry name" value="RNF152_C"/>
</dbReference>
<dbReference type="InterPro" id="IPR018957">
    <property type="entry name" value="Znf_C3HC4_RING-type"/>
</dbReference>
<dbReference type="InterPro" id="IPR001841">
    <property type="entry name" value="Znf_RING"/>
</dbReference>
<dbReference type="InterPro" id="IPR013083">
    <property type="entry name" value="Znf_RING/FYVE/PHD"/>
</dbReference>
<dbReference type="PANTHER" id="PTHR25464:SF1">
    <property type="entry name" value="E3 UBIQUITIN-PROTEIN LIGASE RNF152"/>
    <property type="match status" value="1"/>
</dbReference>
<dbReference type="PANTHER" id="PTHR25464">
    <property type="entry name" value="TRIPARTITE MOTIF-CONTAINING PROTEIN 2-LIKE PROTEIN"/>
    <property type="match status" value="1"/>
</dbReference>
<dbReference type="Pfam" id="PF19325">
    <property type="entry name" value="RNF152_C"/>
    <property type="match status" value="1"/>
</dbReference>
<dbReference type="Pfam" id="PF00097">
    <property type="entry name" value="zf-C3HC4"/>
    <property type="match status" value="1"/>
</dbReference>
<dbReference type="SUPFAM" id="SSF57850">
    <property type="entry name" value="RING/U-box"/>
    <property type="match status" value="1"/>
</dbReference>
<dbReference type="PROSITE" id="PS50089">
    <property type="entry name" value="ZF_RING_2"/>
    <property type="match status" value="1"/>
</dbReference>
<keyword id="KW-0458">Lysosome</keyword>
<keyword id="KW-0472">Membrane</keyword>
<keyword id="KW-0479">Metal-binding</keyword>
<keyword id="KW-1185">Reference proteome</keyword>
<keyword id="KW-0808">Transferase</keyword>
<keyword id="KW-0812">Transmembrane</keyword>
<keyword id="KW-1133">Transmembrane helix</keyword>
<keyword id="KW-0833">Ubl conjugation pathway</keyword>
<keyword id="KW-0862">Zinc</keyword>
<keyword id="KW-0863">Zinc-finger</keyword>
<sequence>MDSLSQSSRLECQICFNYFSQRRLPKLLHCQHTCCSVCLSQMRLSQREIRCPWCRCVTQIPIGLSVSHLPDDPEVLSVISVSQSSEHTPIFIHLPNNGCYLLPVSLDTDGTPLPGQPTCHVGPKSIGVFDVSDGQNHVLGHDGLGDGMEEEEVVVVKTTAWTGVCTVLLVAFILIFLLGIVLHNMSCVSKRFTIISCG</sequence>
<proteinExistence type="evidence at transcript level"/>